<evidence type="ECO:0000255" key="1">
    <source>
        <dbReference type="HAMAP-Rule" id="MF_01813"/>
    </source>
</evidence>
<accession>P9WFR3</accession>
<accession>L0T453</accession>
<accession>O06424</accession>
<accession>P0A638</accession>
<keyword id="KW-0474">Menaquinone biosynthesis</keyword>
<keyword id="KW-0489">Methyltransferase</keyword>
<keyword id="KW-1185">Reference proteome</keyword>
<keyword id="KW-0949">S-adenosyl-L-methionine</keyword>
<keyword id="KW-0808">Transferase</keyword>
<sequence>MSRAALDKDPRDVASMFDGVARKYDLTNTVLSLGQDRYWRRATRSALRIGPGQKVLDLAAGTAVSTVELTKSGAWCVAADFSVGMLAAGAARKVPKVAGDATRLPFGDDVFDAVTISFGLRNVANQQAALREMARVTRPGGRLLVCEFSTPTNALFATAYKEYLMRALPRVARAVSSNPEAYEYLAESIRAWPDQAVLAHQISRAGWSGVRWRNLTGGIVALHAGYKPGKQTPQ</sequence>
<feature type="chain" id="PRO_0000193297" description="Demethylmenaquinone methyltransferase">
    <location>
        <begin position="1"/>
        <end position="234"/>
    </location>
</feature>
<feature type="binding site" evidence="1">
    <location>
        <position position="62"/>
    </location>
    <ligand>
        <name>S-adenosyl-L-methionine</name>
        <dbReference type="ChEBI" id="CHEBI:59789"/>
    </ligand>
</feature>
<feature type="binding site" evidence="1">
    <location>
        <position position="80"/>
    </location>
    <ligand>
        <name>S-adenosyl-L-methionine</name>
        <dbReference type="ChEBI" id="CHEBI:59789"/>
    </ligand>
</feature>
<feature type="binding site" evidence="1">
    <location>
        <begin position="100"/>
        <end position="101"/>
    </location>
    <ligand>
        <name>S-adenosyl-L-methionine</name>
        <dbReference type="ChEBI" id="CHEBI:59789"/>
    </ligand>
</feature>
<feature type="binding site" evidence="1">
    <location>
        <position position="117"/>
    </location>
    <ligand>
        <name>S-adenosyl-L-methionine</name>
        <dbReference type="ChEBI" id="CHEBI:59789"/>
    </ligand>
</feature>
<gene>
    <name evidence="1" type="primary">menG</name>
    <name type="synonym">menH</name>
    <name type="ordered locus">Rv0558</name>
    <name type="ORF">MTCY25D10.37</name>
</gene>
<name>MENG_MYCTU</name>
<protein>
    <recommendedName>
        <fullName evidence="1">Demethylmenaquinone methyltransferase</fullName>
        <ecNumber evidence="1">2.1.1.163</ecNumber>
    </recommendedName>
</protein>
<proteinExistence type="evidence at protein level"/>
<comment type="function">
    <text evidence="1">Methyltransferase required for the conversion of demethylmenaquinol (DMKH2) to menaquinol (MKH2).</text>
</comment>
<comment type="catalytic activity">
    <reaction evidence="1">
        <text>a 2-demethylmenaquinol + S-adenosyl-L-methionine = a menaquinol + S-adenosyl-L-homocysteine + H(+)</text>
        <dbReference type="Rhea" id="RHEA:42640"/>
        <dbReference type="Rhea" id="RHEA-COMP:9539"/>
        <dbReference type="Rhea" id="RHEA-COMP:9563"/>
        <dbReference type="ChEBI" id="CHEBI:15378"/>
        <dbReference type="ChEBI" id="CHEBI:18151"/>
        <dbReference type="ChEBI" id="CHEBI:55437"/>
        <dbReference type="ChEBI" id="CHEBI:57856"/>
        <dbReference type="ChEBI" id="CHEBI:59789"/>
        <dbReference type="EC" id="2.1.1.163"/>
    </reaction>
</comment>
<comment type="pathway">
    <text evidence="1">Quinol/quinone metabolism; menaquinone biosynthesis; menaquinol from 1,4-dihydroxy-2-naphthoate: step 2/2.</text>
</comment>
<comment type="miscellaneous">
    <text>Was identified as a high-confidence drug target.</text>
</comment>
<comment type="similarity">
    <text evidence="1">Belongs to the class I-like SAM-binding methyltransferase superfamily. MenG/UbiE family.</text>
</comment>
<reference key="1">
    <citation type="journal article" date="1998" name="Nature">
        <title>Deciphering the biology of Mycobacterium tuberculosis from the complete genome sequence.</title>
        <authorList>
            <person name="Cole S.T."/>
            <person name="Brosch R."/>
            <person name="Parkhill J."/>
            <person name="Garnier T."/>
            <person name="Churcher C.M."/>
            <person name="Harris D.E."/>
            <person name="Gordon S.V."/>
            <person name="Eiglmeier K."/>
            <person name="Gas S."/>
            <person name="Barry C.E. III"/>
            <person name="Tekaia F."/>
            <person name="Badcock K."/>
            <person name="Basham D."/>
            <person name="Brown D."/>
            <person name="Chillingworth T."/>
            <person name="Connor R."/>
            <person name="Davies R.M."/>
            <person name="Devlin K."/>
            <person name="Feltwell T."/>
            <person name="Gentles S."/>
            <person name="Hamlin N."/>
            <person name="Holroyd S."/>
            <person name="Hornsby T."/>
            <person name="Jagels K."/>
            <person name="Krogh A."/>
            <person name="McLean J."/>
            <person name="Moule S."/>
            <person name="Murphy L.D."/>
            <person name="Oliver S."/>
            <person name="Osborne J."/>
            <person name="Quail M.A."/>
            <person name="Rajandream M.A."/>
            <person name="Rogers J."/>
            <person name="Rutter S."/>
            <person name="Seeger K."/>
            <person name="Skelton S."/>
            <person name="Squares S."/>
            <person name="Squares R."/>
            <person name="Sulston J.E."/>
            <person name="Taylor K."/>
            <person name="Whitehead S."/>
            <person name="Barrell B.G."/>
        </authorList>
    </citation>
    <scope>NUCLEOTIDE SEQUENCE [LARGE SCALE GENOMIC DNA]</scope>
    <source>
        <strain>ATCC 25618 / H37Rv</strain>
    </source>
</reference>
<reference key="2">
    <citation type="journal article" date="2008" name="BMC Syst. Biol.">
        <title>targetTB: a target identification pipeline for Mycobacterium tuberculosis through an interactome, reactome and genome-scale structural analysis.</title>
        <authorList>
            <person name="Raman K."/>
            <person name="Yeturu K."/>
            <person name="Chandra N."/>
        </authorList>
    </citation>
    <scope>IDENTIFICATION AS A DRUG TARGET [LARGE SCALE ANALYSIS]</scope>
</reference>
<reference key="3">
    <citation type="journal article" date="2011" name="Mol. Cell. Proteomics">
        <title>Proteogenomic analysis of Mycobacterium tuberculosis by high resolution mass spectrometry.</title>
        <authorList>
            <person name="Kelkar D.S."/>
            <person name="Kumar D."/>
            <person name="Kumar P."/>
            <person name="Balakrishnan L."/>
            <person name="Muthusamy B."/>
            <person name="Yadav A.K."/>
            <person name="Shrivastava P."/>
            <person name="Marimuthu A."/>
            <person name="Anand S."/>
            <person name="Sundaram H."/>
            <person name="Kingsbury R."/>
            <person name="Harsha H.C."/>
            <person name="Nair B."/>
            <person name="Prasad T.S."/>
            <person name="Chauhan D.S."/>
            <person name="Katoch K."/>
            <person name="Katoch V.M."/>
            <person name="Kumar P."/>
            <person name="Chaerkady R."/>
            <person name="Ramachandran S."/>
            <person name="Dash D."/>
            <person name="Pandey A."/>
        </authorList>
    </citation>
    <scope>IDENTIFICATION BY MASS SPECTROMETRY [LARGE SCALE ANALYSIS]</scope>
    <source>
        <strain>ATCC 25618 / H37Rv</strain>
    </source>
</reference>
<dbReference type="EC" id="2.1.1.163" evidence="1"/>
<dbReference type="EMBL" id="AL123456">
    <property type="protein sequence ID" value="CCP43296.1"/>
    <property type="molecule type" value="Genomic_DNA"/>
</dbReference>
<dbReference type="PIR" id="A70549">
    <property type="entry name" value="A70549"/>
</dbReference>
<dbReference type="RefSeq" id="WP_003402936.1">
    <property type="nucleotide sequence ID" value="NZ_NVQJ01000036.1"/>
</dbReference>
<dbReference type="RefSeq" id="YP_177738.1">
    <property type="nucleotide sequence ID" value="NC_000962.3"/>
</dbReference>
<dbReference type="SMR" id="P9WFR3"/>
<dbReference type="FunCoup" id="P9WFR3">
    <property type="interactions" value="547"/>
</dbReference>
<dbReference type="STRING" id="83332.Rv0558"/>
<dbReference type="PaxDb" id="83332-Rv0558"/>
<dbReference type="DNASU" id="887591"/>
<dbReference type="GeneID" id="887591"/>
<dbReference type="KEGG" id="mtu:Rv0558"/>
<dbReference type="KEGG" id="mtv:RVBD_0558"/>
<dbReference type="TubercuList" id="Rv0558"/>
<dbReference type="eggNOG" id="COG2226">
    <property type="taxonomic scope" value="Bacteria"/>
</dbReference>
<dbReference type="InParanoid" id="P9WFR3"/>
<dbReference type="OrthoDB" id="9808140at2"/>
<dbReference type="PhylomeDB" id="P9WFR3"/>
<dbReference type="UniPathway" id="UPA00079">
    <property type="reaction ID" value="UER00169"/>
</dbReference>
<dbReference type="Proteomes" id="UP000001584">
    <property type="component" value="Chromosome"/>
</dbReference>
<dbReference type="GO" id="GO:0005886">
    <property type="term" value="C:plasma membrane"/>
    <property type="evidence" value="ECO:0007005"/>
    <property type="project" value="MTBBASE"/>
</dbReference>
<dbReference type="GO" id="GO:0043770">
    <property type="term" value="F:demethylmenaquinone methyltransferase activity"/>
    <property type="evidence" value="ECO:0007669"/>
    <property type="project" value="UniProtKB-UniRule"/>
</dbReference>
<dbReference type="GO" id="GO:0008168">
    <property type="term" value="F:methyltransferase activity"/>
    <property type="evidence" value="ECO:0000318"/>
    <property type="project" value="GO_Central"/>
</dbReference>
<dbReference type="GO" id="GO:0009234">
    <property type="term" value="P:menaquinone biosynthetic process"/>
    <property type="evidence" value="ECO:0007669"/>
    <property type="project" value="UniProtKB-UniRule"/>
</dbReference>
<dbReference type="GO" id="GO:0032259">
    <property type="term" value="P:methylation"/>
    <property type="evidence" value="ECO:0007669"/>
    <property type="project" value="UniProtKB-KW"/>
</dbReference>
<dbReference type="CDD" id="cd02440">
    <property type="entry name" value="AdoMet_MTases"/>
    <property type="match status" value="1"/>
</dbReference>
<dbReference type="FunFam" id="3.40.50.150:FF:000373">
    <property type="entry name" value="Demethylmenaquinone methyltransferase"/>
    <property type="match status" value="1"/>
</dbReference>
<dbReference type="Gene3D" id="3.40.50.150">
    <property type="entry name" value="Vaccinia Virus protein VP39"/>
    <property type="match status" value="1"/>
</dbReference>
<dbReference type="HAMAP" id="MF_01813">
    <property type="entry name" value="MenG_UbiE_methyltr"/>
    <property type="match status" value="1"/>
</dbReference>
<dbReference type="InterPro" id="IPR029063">
    <property type="entry name" value="SAM-dependent_MTases_sf"/>
</dbReference>
<dbReference type="InterPro" id="IPR004033">
    <property type="entry name" value="UbiE/COQ5_MeTrFase"/>
</dbReference>
<dbReference type="InterPro" id="IPR023576">
    <property type="entry name" value="UbiE/COQ5_MeTrFase_CS"/>
</dbReference>
<dbReference type="NCBIfam" id="TIGR01934">
    <property type="entry name" value="MenG_MenH_UbiE"/>
    <property type="match status" value="1"/>
</dbReference>
<dbReference type="NCBIfam" id="NF001241">
    <property type="entry name" value="PRK00216.1-2"/>
    <property type="match status" value="1"/>
</dbReference>
<dbReference type="PANTHER" id="PTHR43591:SF24">
    <property type="entry name" value="2-METHOXY-6-POLYPRENYL-1,4-BENZOQUINOL METHYLASE, MITOCHONDRIAL"/>
    <property type="match status" value="1"/>
</dbReference>
<dbReference type="PANTHER" id="PTHR43591">
    <property type="entry name" value="METHYLTRANSFERASE"/>
    <property type="match status" value="1"/>
</dbReference>
<dbReference type="Pfam" id="PF01209">
    <property type="entry name" value="Ubie_methyltran"/>
    <property type="match status" value="1"/>
</dbReference>
<dbReference type="SUPFAM" id="SSF53335">
    <property type="entry name" value="S-adenosyl-L-methionine-dependent methyltransferases"/>
    <property type="match status" value="1"/>
</dbReference>
<dbReference type="PROSITE" id="PS51608">
    <property type="entry name" value="SAM_MT_UBIE"/>
    <property type="match status" value="1"/>
</dbReference>
<dbReference type="PROSITE" id="PS01183">
    <property type="entry name" value="UBIE_1"/>
    <property type="match status" value="1"/>
</dbReference>
<dbReference type="PROSITE" id="PS01184">
    <property type="entry name" value="UBIE_2"/>
    <property type="match status" value="1"/>
</dbReference>
<organism>
    <name type="scientific">Mycobacterium tuberculosis (strain ATCC 25618 / H37Rv)</name>
    <dbReference type="NCBI Taxonomy" id="83332"/>
    <lineage>
        <taxon>Bacteria</taxon>
        <taxon>Bacillati</taxon>
        <taxon>Actinomycetota</taxon>
        <taxon>Actinomycetes</taxon>
        <taxon>Mycobacteriales</taxon>
        <taxon>Mycobacteriaceae</taxon>
        <taxon>Mycobacterium</taxon>
        <taxon>Mycobacterium tuberculosis complex</taxon>
    </lineage>
</organism>